<keyword id="KW-0046">Antibiotic resistance</keyword>
<keyword id="KW-0997">Cell inner membrane</keyword>
<keyword id="KW-1003">Cell membrane</keyword>
<keyword id="KW-0133">Cell shape</keyword>
<keyword id="KW-0961">Cell wall biogenesis/degradation</keyword>
<keyword id="KW-0378">Hydrolase</keyword>
<keyword id="KW-0472">Membrane</keyword>
<keyword id="KW-0573">Peptidoglycan synthesis</keyword>
<keyword id="KW-0812">Transmembrane</keyword>
<keyword id="KW-1133">Transmembrane helix</keyword>
<sequence>MFRQVYNLLEYLKFFLYGLIQGFTEFIPVSSTAHLKVISLFLGIDDPGASLSATIQLGSVLAIAWYFKNDIFNFRSQSSKKLIAYLLHKRLLRSILIGTIPIVLLGGSIKLFVPYFFDNVLRSNLSIALVSFLMAFFMYLADSSRRGSINIKNHNYSNSFLIGFFQAFAIFPGVSRSGITISSALISGWERGDAAKFSFLLGIPAISLAAIVEFISSFNDFFALGFFPLFVGLITTFVSSLLAIDFLLKYFSSNGLKIFIIYRVIFGIVILLNL</sequence>
<name>UPPP_PROMS</name>
<feature type="chain" id="PRO_0000290745" description="Undecaprenyl-diphosphatase">
    <location>
        <begin position="1"/>
        <end position="274"/>
    </location>
</feature>
<feature type="transmembrane region" description="Helical" evidence="1">
    <location>
        <begin position="9"/>
        <end position="29"/>
    </location>
</feature>
<feature type="transmembrane region" description="Helical" evidence="1">
    <location>
        <begin position="47"/>
        <end position="67"/>
    </location>
</feature>
<feature type="transmembrane region" description="Helical" evidence="1">
    <location>
        <begin position="95"/>
        <end position="115"/>
    </location>
</feature>
<feature type="transmembrane region" description="Helical" evidence="1">
    <location>
        <begin position="120"/>
        <end position="140"/>
    </location>
</feature>
<feature type="transmembrane region" description="Helical" evidence="1">
    <location>
        <begin position="161"/>
        <end position="181"/>
    </location>
</feature>
<feature type="transmembrane region" description="Helical" evidence="1">
    <location>
        <begin position="197"/>
        <end position="217"/>
    </location>
</feature>
<feature type="transmembrane region" description="Helical" evidence="1">
    <location>
        <begin position="224"/>
        <end position="244"/>
    </location>
</feature>
<feature type="transmembrane region" description="Helical" evidence="1">
    <location>
        <begin position="254"/>
        <end position="274"/>
    </location>
</feature>
<comment type="function">
    <text evidence="1">Catalyzes the dephosphorylation of undecaprenyl diphosphate (UPP). Confers resistance to bacitracin.</text>
</comment>
<comment type="catalytic activity">
    <reaction evidence="1">
        <text>di-trans,octa-cis-undecaprenyl diphosphate + H2O = di-trans,octa-cis-undecaprenyl phosphate + phosphate + H(+)</text>
        <dbReference type="Rhea" id="RHEA:28094"/>
        <dbReference type="ChEBI" id="CHEBI:15377"/>
        <dbReference type="ChEBI" id="CHEBI:15378"/>
        <dbReference type="ChEBI" id="CHEBI:43474"/>
        <dbReference type="ChEBI" id="CHEBI:58405"/>
        <dbReference type="ChEBI" id="CHEBI:60392"/>
        <dbReference type="EC" id="3.6.1.27"/>
    </reaction>
</comment>
<comment type="subcellular location">
    <subcellularLocation>
        <location evidence="1">Cell inner membrane</location>
        <topology evidence="1">Multi-pass membrane protein</topology>
    </subcellularLocation>
</comment>
<comment type="miscellaneous">
    <text>Bacitracin is thought to be involved in the inhibition of peptidoglycan synthesis by sequestering undecaprenyl diphosphate, thereby reducing the pool of lipid carrier available.</text>
</comment>
<comment type="similarity">
    <text evidence="1">Belongs to the UppP family.</text>
</comment>
<protein>
    <recommendedName>
        <fullName evidence="1">Undecaprenyl-diphosphatase</fullName>
        <ecNumber evidence="1">3.6.1.27</ecNumber>
    </recommendedName>
    <alternativeName>
        <fullName evidence="1">Bacitracin resistance protein</fullName>
    </alternativeName>
    <alternativeName>
        <fullName evidence="1">Undecaprenyl pyrophosphate phosphatase</fullName>
    </alternativeName>
</protein>
<organism>
    <name type="scientific">Prochlorococcus marinus (strain AS9601)</name>
    <dbReference type="NCBI Taxonomy" id="146891"/>
    <lineage>
        <taxon>Bacteria</taxon>
        <taxon>Bacillati</taxon>
        <taxon>Cyanobacteriota</taxon>
        <taxon>Cyanophyceae</taxon>
        <taxon>Synechococcales</taxon>
        <taxon>Prochlorococcaceae</taxon>
        <taxon>Prochlorococcus</taxon>
    </lineage>
</organism>
<accession>A2BQX7</accession>
<reference key="1">
    <citation type="journal article" date="2007" name="PLoS Genet.">
        <title>Patterns and implications of gene gain and loss in the evolution of Prochlorococcus.</title>
        <authorList>
            <person name="Kettler G.C."/>
            <person name="Martiny A.C."/>
            <person name="Huang K."/>
            <person name="Zucker J."/>
            <person name="Coleman M.L."/>
            <person name="Rodrigue S."/>
            <person name="Chen F."/>
            <person name="Lapidus A."/>
            <person name="Ferriera S."/>
            <person name="Johnson J."/>
            <person name="Steglich C."/>
            <person name="Church G.M."/>
            <person name="Richardson P."/>
            <person name="Chisholm S.W."/>
        </authorList>
    </citation>
    <scope>NUCLEOTIDE SEQUENCE [LARGE SCALE GENOMIC DNA]</scope>
    <source>
        <strain>AS9601</strain>
    </source>
</reference>
<proteinExistence type="inferred from homology"/>
<dbReference type="EC" id="3.6.1.27" evidence="1"/>
<dbReference type="EMBL" id="CP000551">
    <property type="protein sequence ID" value="ABM70188.1"/>
    <property type="molecule type" value="Genomic_DNA"/>
</dbReference>
<dbReference type="SMR" id="A2BQX7"/>
<dbReference type="STRING" id="146891.A9601_09041"/>
<dbReference type="KEGG" id="pmb:A9601_09041"/>
<dbReference type="eggNOG" id="COG1968">
    <property type="taxonomic scope" value="Bacteria"/>
</dbReference>
<dbReference type="HOGENOM" id="CLU_060296_1_0_3"/>
<dbReference type="Proteomes" id="UP000002590">
    <property type="component" value="Chromosome"/>
</dbReference>
<dbReference type="GO" id="GO:0005886">
    <property type="term" value="C:plasma membrane"/>
    <property type="evidence" value="ECO:0007669"/>
    <property type="project" value="UniProtKB-SubCell"/>
</dbReference>
<dbReference type="GO" id="GO:0050380">
    <property type="term" value="F:undecaprenyl-diphosphatase activity"/>
    <property type="evidence" value="ECO:0007669"/>
    <property type="project" value="UniProtKB-UniRule"/>
</dbReference>
<dbReference type="GO" id="GO:0071555">
    <property type="term" value="P:cell wall organization"/>
    <property type="evidence" value="ECO:0007669"/>
    <property type="project" value="UniProtKB-KW"/>
</dbReference>
<dbReference type="GO" id="GO:0009252">
    <property type="term" value="P:peptidoglycan biosynthetic process"/>
    <property type="evidence" value="ECO:0007669"/>
    <property type="project" value="UniProtKB-KW"/>
</dbReference>
<dbReference type="GO" id="GO:0008360">
    <property type="term" value="P:regulation of cell shape"/>
    <property type="evidence" value="ECO:0007669"/>
    <property type="project" value="UniProtKB-KW"/>
</dbReference>
<dbReference type="GO" id="GO:0046677">
    <property type="term" value="P:response to antibiotic"/>
    <property type="evidence" value="ECO:0007669"/>
    <property type="project" value="UniProtKB-UniRule"/>
</dbReference>
<dbReference type="HAMAP" id="MF_01006">
    <property type="entry name" value="Undec_diphosphatase"/>
    <property type="match status" value="1"/>
</dbReference>
<dbReference type="InterPro" id="IPR003824">
    <property type="entry name" value="UppP"/>
</dbReference>
<dbReference type="PANTHER" id="PTHR30622">
    <property type="entry name" value="UNDECAPRENYL-DIPHOSPHATASE"/>
    <property type="match status" value="1"/>
</dbReference>
<dbReference type="PANTHER" id="PTHR30622:SF4">
    <property type="entry name" value="UNDECAPRENYL-DIPHOSPHATASE"/>
    <property type="match status" value="1"/>
</dbReference>
<dbReference type="Pfam" id="PF02673">
    <property type="entry name" value="BacA"/>
    <property type="match status" value="1"/>
</dbReference>
<evidence type="ECO:0000255" key="1">
    <source>
        <dbReference type="HAMAP-Rule" id="MF_01006"/>
    </source>
</evidence>
<gene>
    <name evidence="1" type="primary">uppP</name>
    <name type="synonym">bacA</name>
    <name type="ordered locus">A9601_09041</name>
</gene>